<protein>
    <recommendedName>
        <fullName>Viral late gene transcription factor 2</fullName>
        <shortName>VLTF-2</shortName>
    </recommendedName>
    <alternativeName>
        <fullName>Trans-activator protein A1</fullName>
    </alternativeName>
</protein>
<sequence length="150" mass="16906">MAKRVSLPDVVISAPKAVFKPAKEEALACILPKYYKSMADVSIKTNSVIDKCWFCNQDLVFKPISIETFKGGEVGYFCSKICRDSLASMVKSHVALREEPKISLLPLVFYEDKEKVINTINLLRDKDGVYGSCYFKENSQIIDISLRSLL</sequence>
<gene>
    <name type="primary">OPG126</name>
    <name type="synonym">VLTF2</name>
    <name type="ordered locus">VACWR119</name>
    <name type="ORF">A1L</name>
</gene>
<keyword id="KW-0010">Activator</keyword>
<keyword id="KW-0426">Late protein</keyword>
<keyword id="KW-1185">Reference proteome</keyword>
<keyword id="KW-0804">Transcription</keyword>
<keyword id="KW-0805">Transcription regulation</keyword>
<evidence type="ECO:0000269" key="1">
    <source>
    </source>
</evidence>
<evidence type="ECO:0000269" key="2">
    <source>
    </source>
</evidence>
<evidence type="ECO:0000305" key="3"/>
<organism>
    <name type="scientific">Vaccinia virus (strain Western Reserve)</name>
    <name type="common">VACV</name>
    <name type="synonym">Vaccinia virus (strain WR)</name>
    <dbReference type="NCBI Taxonomy" id="10254"/>
    <lineage>
        <taxon>Viruses</taxon>
        <taxon>Varidnaviria</taxon>
        <taxon>Bamfordvirae</taxon>
        <taxon>Nucleocytoviricota</taxon>
        <taxon>Pokkesviricetes</taxon>
        <taxon>Chitovirales</taxon>
        <taxon>Poxviridae</taxon>
        <taxon>Chordopoxvirinae</taxon>
        <taxon>Orthopoxvirus</taxon>
        <taxon>Vaccinia virus</taxon>
    </lineage>
</organism>
<organismHost>
    <name type="scientific">Bos taurus</name>
    <name type="common">Bovine</name>
    <dbReference type="NCBI Taxonomy" id="9913"/>
</organismHost>
<proteinExistence type="evidence at protein level"/>
<reference key="1">
    <citation type="journal article" date="1986" name="Nucleic Acids Res.">
        <title>A tandemly-oriented late gene cluster within the vaccinia virus genome.</title>
        <authorList>
            <person name="Weinrich S.L."/>
            <person name="Hruby D.E."/>
        </authorList>
    </citation>
    <scope>NUCLEOTIDE SEQUENCE [GENOMIC DNA]</scope>
</reference>
<reference key="2">
    <citation type="journal article" date="1987" name="Virology">
        <title>Resistance of vaccinia virus to rifampicin conferred by a single nucleotide substitution near the predicted NH2 terminus of a gene encoding an Mr 62,000 polypeptide.</title>
        <authorList>
            <person name="Baldick C.J. Jr."/>
            <person name="Moss B."/>
        </authorList>
    </citation>
    <scope>NUCLEOTIDE SEQUENCE [GENOMIC DNA]</scope>
</reference>
<reference key="3">
    <citation type="journal article" date="1992" name="Virology">
        <title>Identification of a temperature-sensitive mutant of vaccinia virus defective in late but not intermediate gene expression.</title>
        <authorList>
            <person name="Carpenter M.S."/>
            <person name="Delange A.M."/>
        </authorList>
    </citation>
    <scope>NUCLEOTIDE SEQUENCE [GENOMIC DNA]</scope>
</reference>
<reference key="4">
    <citation type="submission" date="2003-02" db="EMBL/GenBank/DDBJ databases">
        <title>Sequencing of the coding region of Vaccinia-WR to an average 9-fold redundancy and an error rate of 0.16/10kb.</title>
        <authorList>
            <person name="Esposito J.J."/>
            <person name="Frace A.M."/>
            <person name="Sammons S.A."/>
            <person name="Olsen-Rasmussen M."/>
            <person name="Osborne J."/>
            <person name="Wohlhueter R."/>
        </authorList>
    </citation>
    <scope>NUCLEOTIDE SEQUENCE [LARGE SCALE GENOMIC DNA]</scope>
</reference>
<reference key="5">
    <citation type="journal article" date="1990" name="Cell">
        <title>Role of DNA replication in vaccinia virus gene expression: a naked template is required for transcription of three late trans-activator genes.</title>
        <authorList>
            <person name="Keck J.G."/>
            <person name="Baldick C.J. Jr."/>
            <person name="Moss B."/>
        </authorList>
    </citation>
    <scope>CHARACTERIZATION</scope>
</reference>
<reference key="6">
    <citation type="journal article" date="1993" name="J. Virol.">
        <title>Overexpression, purification, and late transcription factor activity of the 17-kilodalton protein encoded by the vaccinia virus A1L gene.</title>
        <authorList>
            <person name="Keck J.G."/>
            <person name="Kovacs G.R."/>
            <person name="Moss B."/>
        </authorList>
    </citation>
    <scope>FUNCTION</scope>
</reference>
<reference key="7">
    <citation type="journal article" date="2004" name="Virology">
        <title>Protein interactions among the vaccinia virus late transcription factors.</title>
        <authorList>
            <person name="Dellis S."/>
            <person name="Strickland K.C."/>
            <person name="McCrary W.J."/>
            <person name="Patel A."/>
            <person name="Stocum E."/>
            <person name="Wright C.F."/>
        </authorList>
    </citation>
    <scope>INTERACTION WITH VLTF-1/OPG093</scope>
</reference>
<name>VLTF2_VACCW</name>
<accession>P07610</accession>
<accession>Q76ZR3</accession>
<dbReference type="EMBL" id="M16556">
    <property type="protein sequence ID" value="AAA48304.1"/>
    <property type="molecule type" value="Genomic_DNA"/>
</dbReference>
<dbReference type="EMBL" id="X03729">
    <property type="protein sequence ID" value="CAA27367.1"/>
    <property type="molecule type" value="Genomic_DNA"/>
</dbReference>
<dbReference type="EMBL" id="M86531">
    <property type="protein sequence ID" value="AAB59802.1"/>
    <property type="molecule type" value="Genomic_DNA"/>
</dbReference>
<dbReference type="EMBL" id="AY243312">
    <property type="protein sequence ID" value="AAO89398.1"/>
    <property type="molecule type" value="Genomic_DNA"/>
</dbReference>
<dbReference type="PIR" id="C23768">
    <property type="entry name" value="WMVZR2"/>
</dbReference>
<dbReference type="RefSeq" id="YP_233001.1">
    <property type="nucleotide sequence ID" value="NC_006998.1"/>
</dbReference>
<dbReference type="DIP" id="DIP-2161N"/>
<dbReference type="IntAct" id="P07610">
    <property type="interactions" value="2"/>
</dbReference>
<dbReference type="MINT" id="P07610"/>
<dbReference type="DNASU" id="3707517"/>
<dbReference type="GeneID" id="3707517"/>
<dbReference type="KEGG" id="vg:3707517"/>
<dbReference type="Proteomes" id="UP000000344">
    <property type="component" value="Genome"/>
</dbReference>
<dbReference type="GO" id="GO:0042802">
    <property type="term" value="F:identical protein binding"/>
    <property type="evidence" value="ECO:0000353"/>
    <property type="project" value="IntAct"/>
</dbReference>
<dbReference type="GO" id="GO:0008270">
    <property type="term" value="F:zinc ion binding"/>
    <property type="evidence" value="ECO:0007669"/>
    <property type="project" value="InterPro"/>
</dbReference>
<dbReference type="GO" id="GO:0039695">
    <property type="term" value="P:DNA-templated viral transcription"/>
    <property type="evidence" value="ECO:0000314"/>
    <property type="project" value="UniProtKB"/>
</dbReference>
<dbReference type="InterPro" id="IPR004975">
    <property type="entry name" value="Poxvirus_VLTF2"/>
</dbReference>
<dbReference type="InterPro" id="IPR010507">
    <property type="entry name" value="Znf_MYM"/>
</dbReference>
<dbReference type="Pfam" id="PF03295">
    <property type="entry name" value="Pox_TAA1"/>
    <property type="match status" value="1"/>
</dbReference>
<dbReference type="Pfam" id="PF06467">
    <property type="entry name" value="zf-FCS"/>
    <property type="match status" value="1"/>
</dbReference>
<feature type="chain" id="PRO_0000099172" description="Viral late gene transcription factor 2">
    <location>
        <begin position="1"/>
        <end position="150"/>
    </location>
</feature>
<comment type="function">
    <text evidence="2">Acts with RNA polymerase to initiate transcription from late gene promoters.</text>
</comment>
<comment type="subunit">
    <text evidence="1">Interacts with itself. Interacts with the late transcription factors VLTF-1/OPG093.</text>
</comment>
<comment type="interaction">
    <interactant intactId="EBI-7273273">
        <id>P07610</id>
    </interactant>
    <interactant intactId="EBI-7273218">
        <id>P68613</id>
        <label>OPG093</label>
    </interactant>
    <organismsDiffer>false</organismsDiffer>
    <experiments>4</experiments>
</comment>
<comment type="interaction">
    <interactant intactId="EBI-7273273">
        <id>P07610</id>
    </interactant>
    <interactant intactId="EBI-7273273">
        <id>P07610</id>
        <label>OPG126</label>
    </interactant>
    <organismsDiffer>false</organismsDiffer>
    <experiments>2</experiments>
</comment>
<comment type="developmental stage">
    <text>Intermediate stages of infection.</text>
</comment>
<comment type="similarity">
    <text evidence="3">Belongs to the orthopoxvirus VLTF-2/OPG126 family.</text>
</comment>